<reference key="1">
    <citation type="journal article" date="2009" name="J. Bacteriol.">
        <title>The complete genome sequence of Helicobacter pylori strain G27.</title>
        <authorList>
            <person name="Baltrus D.A."/>
            <person name="Amieva M.R."/>
            <person name="Covacci A."/>
            <person name="Lowe T.M."/>
            <person name="Merrell D.S."/>
            <person name="Ottemann K.M."/>
            <person name="Stein M."/>
            <person name="Salama N.R."/>
            <person name="Guillemin K."/>
        </authorList>
    </citation>
    <scope>NUCLEOTIDE SEQUENCE [LARGE SCALE GENOMIC DNA]</scope>
    <source>
        <strain>G27</strain>
    </source>
</reference>
<accession>B5Z7M7</accession>
<evidence type="ECO:0000255" key="1">
    <source>
        <dbReference type="HAMAP-Rule" id="MF_00392"/>
    </source>
</evidence>
<name>LPXB_HELPG</name>
<gene>
    <name evidence="1" type="primary">lpxB</name>
    <name type="ordered locus">HPG27_821</name>
</gene>
<proteinExistence type="inferred from homology"/>
<sequence>MPTILVSALEASSNMHLEELHRNLPEDYRFIGVFEGKNALYSPREFSIMGFRDVIGRLGFLLKAHKEMVQLAKQADMVLLMDSSSFNIPLAKKIKKQDPHKKIMYYILPQVWAWKKWRAKSLEKYCDFLGAILPFEVGYYQKKAQYVGHPLLDEIKYYKKDIKGETLVFMPGSRKSEIAKMFPLFVKVAQILEQNEGFKRRVLVVPSFFKGLDLKALYGEDIQLFEISYDAHKSLFEAEFAFICSGTATLEAALIGTPFVLAYRAKTMDFLIARMLVNLHYIGLANIFYNALNDETPGLGESQLHPELIQHFLSVEGLLKAYEEMDRERYFKESLRLREYLKHGSARKIANEMAFLLNLT</sequence>
<dbReference type="EC" id="2.4.1.182" evidence="1"/>
<dbReference type="EMBL" id="CP001173">
    <property type="protein sequence ID" value="ACI27576.1"/>
    <property type="molecule type" value="Genomic_DNA"/>
</dbReference>
<dbReference type="RefSeq" id="WP_001142235.1">
    <property type="nucleotide sequence ID" value="NC_011333.1"/>
</dbReference>
<dbReference type="SMR" id="B5Z7M7"/>
<dbReference type="CAZy" id="GT19">
    <property type="family name" value="Glycosyltransferase Family 19"/>
</dbReference>
<dbReference type="KEGG" id="hpg:HPG27_821"/>
<dbReference type="HOGENOM" id="CLU_036577_3_1_7"/>
<dbReference type="UniPathway" id="UPA00973"/>
<dbReference type="Proteomes" id="UP000001735">
    <property type="component" value="Chromosome"/>
</dbReference>
<dbReference type="GO" id="GO:0016020">
    <property type="term" value="C:membrane"/>
    <property type="evidence" value="ECO:0007669"/>
    <property type="project" value="GOC"/>
</dbReference>
<dbReference type="GO" id="GO:0008915">
    <property type="term" value="F:lipid-A-disaccharide synthase activity"/>
    <property type="evidence" value="ECO:0007669"/>
    <property type="project" value="UniProtKB-UniRule"/>
</dbReference>
<dbReference type="GO" id="GO:0005543">
    <property type="term" value="F:phospholipid binding"/>
    <property type="evidence" value="ECO:0007669"/>
    <property type="project" value="TreeGrafter"/>
</dbReference>
<dbReference type="GO" id="GO:0009245">
    <property type="term" value="P:lipid A biosynthetic process"/>
    <property type="evidence" value="ECO:0007669"/>
    <property type="project" value="UniProtKB-UniRule"/>
</dbReference>
<dbReference type="HAMAP" id="MF_00392">
    <property type="entry name" value="LpxB"/>
    <property type="match status" value="1"/>
</dbReference>
<dbReference type="InterPro" id="IPR003835">
    <property type="entry name" value="Glyco_trans_19"/>
</dbReference>
<dbReference type="NCBIfam" id="TIGR00215">
    <property type="entry name" value="lpxB"/>
    <property type="match status" value="1"/>
</dbReference>
<dbReference type="PANTHER" id="PTHR30372">
    <property type="entry name" value="LIPID-A-DISACCHARIDE SYNTHASE"/>
    <property type="match status" value="1"/>
</dbReference>
<dbReference type="PANTHER" id="PTHR30372:SF4">
    <property type="entry name" value="LIPID-A-DISACCHARIDE SYNTHASE, MITOCHONDRIAL-RELATED"/>
    <property type="match status" value="1"/>
</dbReference>
<dbReference type="Pfam" id="PF02684">
    <property type="entry name" value="LpxB"/>
    <property type="match status" value="1"/>
</dbReference>
<dbReference type="SUPFAM" id="SSF53756">
    <property type="entry name" value="UDP-Glycosyltransferase/glycogen phosphorylase"/>
    <property type="match status" value="1"/>
</dbReference>
<comment type="function">
    <text evidence="1">Condensation of UDP-2,3-diacylglucosamine and 2,3-diacylglucosamine-1-phosphate to form lipid A disaccharide, a precursor of lipid A, a phosphorylated glycolipid that anchors the lipopolysaccharide to the outer membrane of the cell.</text>
</comment>
<comment type="catalytic activity">
    <reaction evidence="1">
        <text>a lipid X + a UDP-2-N,3-O-bis[(3R)-3-hydroxyacyl]-alpha-D-glucosamine = a lipid A disaccharide + UDP + H(+)</text>
        <dbReference type="Rhea" id="RHEA:67828"/>
        <dbReference type="ChEBI" id="CHEBI:15378"/>
        <dbReference type="ChEBI" id="CHEBI:58223"/>
        <dbReference type="ChEBI" id="CHEBI:137748"/>
        <dbReference type="ChEBI" id="CHEBI:176338"/>
        <dbReference type="ChEBI" id="CHEBI:176343"/>
        <dbReference type="EC" id="2.4.1.182"/>
    </reaction>
</comment>
<comment type="pathway">
    <text evidence="1">Bacterial outer membrane biogenesis; LPS lipid A biosynthesis.</text>
</comment>
<comment type="similarity">
    <text evidence="1">Belongs to the LpxB family.</text>
</comment>
<feature type="chain" id="PRO_1000123052" description="Lipid-A-disaccharide synthase">
    <location>
        <begin position="1"/>
        <end position="360"/>
    </location>
</feature>
<organism>
    <name type="scientific">Helicobacter pylori (strain G27)</name>
    <dbReference type="NCBI Taxonomy" id="563041"/>
    <lineage>
        <taxon>Bacteria</taxon>
        <taxon>Pseudomonadati</taxon>
        <taxon>Campylobacterota</taxon>
        <taxon>Epsilonproteobacteria</taxon>
        <taxon>Campylobacterales</taxon>
        <taxon>Helicobacteraceae</taxon>
        <taxon>Helicobacter</taxon>
    </lineage>
</organism>
<keyword id="KW-0328">Glycosyltransferase</keyword>
<keyword id="KW-0441">Lipid A biosynthesis</keyword>
<keyword id="KW-0444">Lipid biosynthesis</keyword>
<keyword id="KW-0443">Lipid metabolism</keyword>
<keyword id="KW-1185">Reference proteome</keyword>
<keyword id="KW-0808">Transferase</keyword>
<protein>
    <recommendedName>
        <fullName evidence="1">Lipid-A-disaccharide synthase</fullName>
        <ecNumber evidence="1">2.4.1.182</ecNumber>
    </recommendedName>
</protein>